<feature type="chain" id="PRO_1000133776" description="GTPase Era">
    <location>
        <begin position="1"/>
        <end position="307"/>
    </location>
</feature>
<feature type="domain" description="Era-type G" evidence="2">
    <location>
        <begin position="7"/>
        <end position="181"/>
    </location>
</feature>
<feature type="domain" description="KH type-2" evidence="1">
    <location>
        <begin position="212"/>
        <end position="290"/>
    </location>
</feature>
<feature type="region of interest" description="G1" evidence="2">
    <location>
        <begin position="15"/>
        <end position="22"/>
    </location>
</feature>
<feature type="region of interest" description="G2" evidence="2">
    <location>
        <begin position="41"/>
        <end position="45"/>
    </location>
</feature>
<feature type="region of interest" description="G3" evidence="2">
    <location>
        <begin position="62"/>
        <end position="65"/>
    </location>
</feature>
<feature type="region of interest" description="G4" evidence="2">
    <location>
        <begin position="130"/>
        <end position="133"/>
    </location>
</feature>
<feature type="region of interest" description="G5" evidence="2">
    <location>
        <begin position="160"/>
        <end position="162"/>
    </location>
</feature>
<feature type="binding site" evidence="1">
    <location>
        <begin position="15"/>
        <end position="22"/>
    </location>
    <ligand>
        <name>GTP</name>
        <dbReference type="ChEBI" id="CHEBI:37565"/>
    </ligand>
</feature>
<feature type="binding site" evidence="1">
    <location>
        <begin position="62"/>
        <end position="66"/>
    </location>
    <ligand>
        <name>GTP</name>
        <dbReference type="ChEBI" id="CHEBI:37565"/>
    </ligand>
</feature>
<feature type="binding site" evidence="1">
    <location>
        <begin position="130"/>
        <end position="133"/>
    </location>
    <ligand>
        <name>GTP</name>
        <dbReference type="ChEBI" id="CHEBI:37565"/>
    </ligand>
</feature>
<protein>
    <recommendedName>
        <fullName evidence="1">GTPase Era</fullName>
    </recommendedName>
</protein>
<comment type="function">
    <text evidence="1">An essential GTPase that binds both GDP and GTP, with rapid nucleotide exchange. Plays a role in 16S rRNA processing and 30S ribosomal subunit biogenesis and possibly also in cell cycle regulation and energy metabolism.</text>
</comment>
<comment type="subunit">
    <text evidence="1">Monomer.</text>
</comment>
<comment type="subcellular location">
    <subcellularLocation>
        <location>Cytoplasm</location>
    </subcellularLocation>
    <subcellularLocation>
        <location evidence="1">Cell inner membrane</location>
        <topology evidence="1">Peripheral membrane protein</topology>
    </subcellularLocation>
</comment>
<comment type="similarity">
    <text evidence="1 2">Belongs to the TRAFAC class TrmE-Era-EngA-EngB-Septin-like GTPase superfamily. Era GTPase family.</text>
</comment>
<dbReference type="EMBL" id="CP001358">
    <property type="protein sequence ID" value="ACL48284.1"/>
    <property type="molecule type" value="Genomic_DNA"/>
</dbReference>
<dbReference type="SMR" id="B8J3P9"/>
<dbReference type="STRING" id="525146.Ddes_0371"/>
<dbReference type="KEGG" id="dds:Ddes_0371"/>
<dbReference type="eggNOG" id="COG1159">
    <property type="taxonomic scope" value="Bacteria"/>
</dbReference>
<dbReference type="HOGENOM" id="CLU_038009_1_0_7"/>
<dbReference type="GO" id="GO:0005737">
    <property type="term" value="C:cytoplasm"/>
    <property type="evidence" value="ECO:0007669"/>
    <property type="project" value="UniProtKB-SubCell"/>
</dbReference>
<dbReference type="GO" id="GO:0005886">
    <property type="term" value="C:plasma membrane"/>
    <property type="evidence" value="ECO:0007669"/>
    <property type="project" value="UniProtKB-SubCell"/>
</dbReference>
<dbReference type="GO" id="GO:0005525">
    <property type="term" value="F:GTP binding"/>
    <property type="evidence" value="ECO:0007669"/>
    <property type="project" value="UniProtKB-UniRule"/>
</dbReference>
<dbReference type="GO" id="GO:0003924">
    <property type="term" value="F:GTPase activity"/>
    <property type="evidence" value="ECO:0007669"/>
    <property type="project" value="UniProtKB-UniRule"/>
</dbReference>
<dbReference type="GO" id="GO:0043024">
    <property type="term" value="F:ribosomal small subunit binding"/>
    <property type="evidence" value="ECO:0007669"/>
    <property type="project" value="TreeGrafter"/>
</dbReference>
<dbReference type="GO" id="GO:0070181">
    <property type="term" value="F:small ribosomal subunit rRNA binding"/>
    <property type="evidence" value="ECO:0007669"/>
    <property type="project" value="UniProtKB-UniRule"/>
</dbReference>
<dbReference type="GO" id="GO:0000028">
    <property type="term" value="P:ribosomal small subunit assembly"/>
    <property type="evidence" value="ECO:0007669"/>
    <property type="project" value="TreeGrafter"/>
</dbReference>
<dbReference type="CDD" id="cd04163">
    <property type="entry name" value="Era"/>
    <property type="match status" value="1"/>
</dbReference>
<dbReference type="CDD" id="cd22534">
    <property type="entry name" value="KH-II_Era"/>
    <property type="match status" value="1"/>
</dbReference>
<dbReference type="Gene3D" id="3.30.300.20">
    <property type="match status" value="1"/>
</dbReference>
<dbReference type="Gene3D" id="3.40.50.300">
    <property type="entry name" value="P-loop containing nucleotide triphosphate hydrolases"/>
    <property type="match status" value="1"/>
</dbReference>
<dbReference type="HAMAP" id="MF_00367">
    <property type="entry name" value="GTPase_Era"/>
    <property type="match status" value="1"/>
</dbReference>
<dbReference type="InterPro" id="IPR030388">
    <property type="entry name" value="G_ERA_dom"/>
</dbReference>
<dbReference type="InterPro" id="IPR006073">
    <property type="entry name" value="GTP-bd"/>
</dbReference>
<dbReference type="InterPro" id="IPR005662">
    <property type="entry name" value="GTPase_Era-like"/>
</dbReference>
<dbReference type="InterPro" id="IPR015946">
    <property type="entry name" value="KH_dom-like_a/b"/>
</dbReference>
<dbReference type="InterPro" id="IPR004044">
    <property type="entry name" value="KH_dom_type_2"/>
</dbReference>
<dbReference type="InterPro" id="IPR009019">
    <property type="entry name" value="KH_sf_prok-type"/>
</dbReference>
<dbReference type="InterPro" id="IPR027417">
    <property type="entry name" value="P-loop_NTPase"/>
</dbReference>
<dbReference type="InterPro" id="IPR005225">
    <property type="entry name" value="Small_GTP-bd"/>
</dbReference>
<dbReference type="NCBIfam" id="TIGR00436">
    <property type="entry name" value="era"/>
    <property type="match status" value="1"/>
</dbReference>
<dbReference type="NCBIfam" id="NF000908">
    <property type="entry name" value="PRK00089.1"/>
    <property type="match status" value="1"/>
</dbReference>
<dbReference type="NCBIfam" id="TIGR00231">
    <property type="entry name" value="small_GTP"/>
    <property type="match status" value="1"/>
</dbReference>
<dbReference type="PANTHER" id="PTHR42698">
    <property type="entry name" value="GTPASE ERA"/>
    <property type="match status" value="1"/>
</dbReference>
<dbReference type="PANTHER" id="PTHR42698:SF1">
    <property type="entry name" value="GTPASE ERA, MITOCHONDRIAL"/>
    <property type="match status" value="1"/>
</dbReference>
<dbReference type="Pfam" id="PF07650">
    <property type="entry name" value="KH_2"/>
    <property type="match status" value="1"/>
</dbReference>
<dbReference type="Pfam" id="PF01926">
    <property type="entry name" value="MMR_HSR1"/>
    <property type="match status" value="1"/>
</dbReference>
<dbReference type="SUPFAM" id="SSF52540">
    <property type="entry name" value="P-loop containing nucleoside triphosphate hydrolases"/>
    <property type="match status" value="1"/>
</dbReference>
<dbReference type="SUPFAM" id="SSF54814">
    <property type="entry name" value="Prokaryotic type KH domain (KH-domain type II)"/>
    <property type="match status" value="1"/>
</dbReference>
<dbReference type="PROSITE" id="PS51713">
    <property type="entry name" value="G_ERA"/>
    <property type="match status" value="1"/>
</dbReference>
<dbReference type="PROSITE" id="PS50823">
    <property type="entry name" value="KH_TYPE_2"/>
    <property type="match status" value="1"/>
</dbReference>
<gene>
    <name evidence="1" type="primary">era</name>
    <name type="ordered locus">Ddes_0371</name>
</gene>
<organism>
    <name type="scientific">Desulfovibrio desulfuricans (strain ATCC 27774 / DSM 6949 / MB)</name>
    <dbReference type="NCBI Taxonomy" id="525146"/>
    <lineage>
        <taxon>Bacteria</taxon>
        <taxon>Pseudomonadati</taxon>
        <taxon>Thermodesulfobacteriota</taxon>
        <taxon>Desulfovibrionia</taxon>
        <taxon>Desulfovibrionales</taxon>
        <taxon>Desulfovibrionaceae</taxon>
        <taxon>Desulfovibrio</taxon>
    </lineage>
</organism>
<sequence>MTDLHYRCGWVALMGPPNAGKSTLLNALLGQKVTIVTPKPQTTRNQIVGILTDDDAQTIFMDTPGLTQVRGRLSKTMIQAVWQSLNQADIIMPVLDAHLYIRHPEFLDRDLAPVAQALASEERPMIVVVNKVDLFGDKSRMLPLLTRLHEMWPRADIFPISALHKDGLADLVELIRKKLPKGQAQFPEDQISTAPLRFMTAEIVREKLFMHLRQEVPYSVAVDVESWEEDEERGQTVIHATIYVARPMHKAMVIGRAGQSIKAIGTEARKDIQELVGGKVHLELWVKVREHWTEDTAFLRDLGLMAE</sequence>
<reference key="1">
    <citation type="submission" date="2009-01" db="EMBL/GenBank/DDBJ databases">
        <title>Complete sequence of Desulfovibrio desulfuricans subsp. desulfuricans str. ATCC 27774.</title>
        <authorList>
            <consortium name="US DOE Joint Genome Institute"/>
            <person name="Lucas S."/>
            <person name="Copeland A."/>
            <person name="Lapidus A."/>
            <person name="Glavina del Rio T."/>
            <person name="Tice H."/>
            <person name="Bruce D."/>
            <person name="Goodwin L."/>
            <person name="Pitluck S."/>
            <person name="Sims D."/>
            <person name="Lu M."/>
            <person name="Kiss H."/>
            <person name="Meineke L."/>
            <person name="Brettin T."/>
            <person name="Detter J.C."/>
            <person name="Han C."/>
            <person name="Larimer F."/>
            <person name="Land M."/>
            <person name="Hauser L."/>
            <person name="Kyrpides N."/>
            <person name="Ovchinnikova G."/>
            <person name="Hazen T.C."/>
        </authorList>
    </citation>
    <scope>NUCLEOTIDE SEQUENCE [LARGE SCALE GENOMIC DNA]</scope>
    <source>
        <strain>ATCC 27774 / DSM 6949 / MB</strain>
    </source>
</reference>
<name>ERA_DESDA</name>
<keyword id="KW-0997">Cell inner membrane</keyword>
<keyword id="KW-1003">Cell membrane</keyword>
<keyword id="KW-0963">Cytoplasm</keyword>
<keyword id="KW-0342">GTP-binding</keyword>
<keyword id="KW-0472">Membrane</keyword>
<keyword id="KW-0547">Nucleotide-binding</keyword>
<keyword id="KW-0690">Ribosome biogenesis</keyword>
<keyword id="KW-0694">RNA-binding</keyword>
<keyword id="KW-0699">rRNA-binding</keyword>
<evidence type="ECO:0000255" key="1">
    <source>
        <dbReference type="HAMAP-Rule" id="MF_00367"/>
    </source>
</evidence>
<evidence type="ECO:0000255" key="2">
    <source>
        <dbReference type="PROSITE-ProRule" id="PRU01050"/>
    </source>
</evidence>
<proteinExistence type="inferred from homology"/>
<accession>B8J3P9</accession>